<proteinExistence type="evidence at transcript level"/>
<evidence type="ECO:0000255" key="1">
    <source>
        <dbReference type="PROSITE-ProRule" id="PRU00448"/>
    </source>
</evidence>
<evidence type="ECO:0000305" key="2"/>
<gene>
    <name type="primary">CAM1</name>
</gene>
<protein>
    <recommendedName>
        <fullName>Calmodulin, flagellar</fullName>
    </recommendedName>
    <alternativeName>
        <fullName>CAM-1</fullName>
    </alternativeName>
</protein>
<dbReference type="EMBL" id="U04381">
    <property type="protein sequence ID" value="AAA81897.1"/>
    <property type="molecule type" value="Genomic_DNA"/>
</dbReference>
<dbReference type="RefSeq" id="XP_002683533.1">
    <property type="nucleotide sequence ID" value="XM_002683487.1"/>
</dbReference>
<dbReference type="SMR" id="P53440"/>
<dbReference type="KEGG" id="ngr:NAEGRDRAFT_55564"/>
<dbReference type="VEuPathDB" id="AmoebaDB:NAEGRDRAFT_55564"/>
<dbReference type="eggNOG" id="KOG0027">
    <property type="taxonomic scope" value="Eukaryota"/>
</dbReference>
<dbReference type="OMA" id="ARKMKEC"/>
<dbReference type="OrthoDB" id="26525at2759"/>
<dbReference type="GO" id="GO:0031514">
    <property type="term" value="C:motile cilium"/>
    <property type="evidence" value="ECO:0007669"/>
    <property type="project" value="UniProtKB-SubCell"/>
</dbReference>
<dbReference type="GO" id="GO:0016460">
    <property type="term" value="C:myosin II complex"/>
    <property type="evidence" value="ECO:0007669"/>
    <property type="project" value="TreeGrafter"/>
</dbReference>
<dbReference type="GO" id="GO:0005509">
    <property type="term" value="F:calcium ion binding"/>
    <property type="evidence" value="ECO:0007669"/>
    <property type="project" value="InterPro"/>
</dbReference>
<dbReference type="CDD" id="cd00051">
    <property type="entry name" value="EFh"/>
    <property type="match status" value="2"/>
</dbReference>
<dbReference type="FunFam" id="1.10.238.10:FF:000006">
    <property type="entry name" value="Calmodulin 1"/>
    <property type="match status" value="1"/>
</dbReference>
<dbReference type="FunFam" id="1.10.238.10:FF:000398">
    <property type="entry name" value="Calmodulin-like protein 3"/>
    <property type="match status" value="1"/>
</dbReference>
<dbReference type="Gene3D" id="1.10.238.10">
    <property type="entry name" value="EF-hand"/>
    <property type="match status" value="3"/>
</dbReference>
<dbReference type="InterPro" id="IPR050230">
    <property type="entry name" value="CALM/Myosin/TropC-like"/>
</dbReference>
<dbReference type="InterPro" id="IPR011992">
    <property type="entry name" value="EF-hand-dom_pair"/>
</dbReference>
<dbReference type="InterPro" id="IPR018247">
    <property type="entry name" value="EF_Hand_1_Ca_BS"/>
</dbReference>
<dbReference type="InterPro" id="IPR002048">
    <property type="entry name" value="EF_hand_dom"/>
</dbReference>
<dbReference type="PANTHER" id="PTHR23048:SF0">
    <property type="entry name" value="CALMODULIN LIKE 3"/>
    <property type="match status" value="1"/>
</dbReference>
<dbReference type="PANTHER" id="PTHR23048">
    <property type="entry name" value="MYOSIN LIGHT CHAIN 1, 3"/>
    <property type="match status" value="1"/>
</dbReference>
<dbReference type="Pfam" id="PF13499">
    <property type="entry name" value="EF-hand_7"/>
    <property type="match status" value="2"/>
</dbReference>
<dbReference type="SMART" id="SM00054">
    <property type="entry name" value="EFh"/>
    <property type="match status" value="4"/>
</dbReference>
<dbReference type="SUPFAM" id="SSF47473">
    <property type="entry name" value="EF-hand"/>
    <property type="match status" value="1"/>
</dbReference>
<dbReference type="PROSITE" id="PS00018">
    <property type="entry name" value="EF_HAND_1"/>
    <property type="match status" value="4"/>
</dbReference>
<dbReference type="PROSITE" id="PS50222">
    <property type="entry name" value="EF_HAND_2"/>
    <property type="match status" value="4"/>
</dbReference>
<feature type="chain" id="PRO_0000198260" description="Calmodulin, flagellar">
    <location>
        <begin position="1"/>
        <end position="155"/>
    </location>
</feature>
<feature type="domain" description="EF-hand 1" evidence="1">
    <location>
        <begin position="14"/>
        <end position="49"/>
    </location>
</feature>
<feature type="domain" description="EF-hand 2" evidence="1">
    <location>
        <begin position="50"/>
        <end position="85"/>
    </location>
</feature>
<feature type="domain" description="EF-hand 3" evidence="1">
    <location>
        <begin position="87"/>
        <end position="122"/>
    </location>
</feature>
<feature type="domain" description="EF-hand 4" evidence="1">
    <location>
        <begin position="123"/>
        <end position="155"/>
    </location>
</feature>
<feature type="binding site" evidence="1">
    <location>
        <position position="27"/>
    </location>
    <ligand>
        <name>Ca(2+)</name>
        <dbReference type="ChEBI" id="CHEBI:29108"/>
        <label>1</label>
    </ligand>
</feature>
<feature type="binding site" evidence="1">
    <location>
        <position position="29"/>
    </location>
    <ligand>
        <name>Ca(2+)</name>
        <dbReference type="ChEBI" id="CHEBI:29108"/>
        <label>1</label>
    </ligand>
</feature>
<feature type="binding site" evidence="1">
    <location>
        <position position="31"/>
    </location>
    <ligand>
        <name>Ca(2+)</name>
        <dbReference type="ChEBI" id="CHEBI:29108"/>
        <label>1</label>
    </ligand>
</feature>
<feature type="binding site" evidence="1">
    <location>
        <position position="33"/>
    </location>
    <ligand>
        <name>Ca(2+)</name>
        <dbReference type="ChEBI" id="CHEBI:29108"/>
        <label>1</label>
    </ligand>
</feature>
<feature type="binding site" evidence="1">
    <location>
        <position position="38"/>
    </location>
    <ligand>
        <name>Ca(2+)</name>
        <dbReference type="ChEBI" id="CHEBI:29108"/>
        <label>1</label>
    </ligand>
</feature>
<feature type="binding site" evidence="1">
    <location>
        <position position="63"/>
    </location>
    <ligand>
        <name>Ca(2+)</name>
        <dbReference type="ChEBI" id="CHEBI:29108"/>
        <label>2</label>
    </ligand>
</feature>
<feature type="binding site" evidence="1">
    <location>
        <position position="65"/>
    </location>
    <ligand>
        <name>Ca(2+)</name>
        <dbReference type="ChEBI" id="CHEBI:29108"/>
        <label>2</label>
    </ligand>
</feature>
<feature type="binding site" evidence="1">
    <location>
        <position position="67"/>
    </location>
    <ligand>
        <name>Ca(2+)</name>
        <dbReference type="ChEBI" id="CHEBI:29108"/>
        <label>2</label>
    </ligand>
</feature>
<feature type="binding site" evidence="1">
    <location>
        <position position="69"/>
    </location>
    <ligand>
        <name>Ca(2+)</name>
        <dbReference type="ChEBI" id="CHEBI:29108"/>
        <label>2</label>
    </ligand>
</feature>
<feature type="binding site" evidence="1">
    <location>
        <position position="74"/>
    </location>
    <ligand>
        <name>Ca(2+)</name>
        <dbReference type="ChEBI" id="CHEBI:29108"/>
        <label>2</label>
    </ligand>
</feature>
<feature type="binding site" evidence="1">
    <location>
        <position position="100"/>
    </location>
    <ligand>
        <name>Ca(2+)</name>
        <dbReference type="ChEBI" id="CHEBI:29108"/>
        <label>3</label>
    </ligand>
</feature>
<feature type="binding site" evidence="1">
    <location>
        <position position="102"/>
    </location>
    <ligand>
        <name>Ca(2+)</name>
        <dbReference type="ChEBI" id="CHEBI:29108"/>
        <label>3</label>
    </ligand>
</feature>
<feature type="binding site" evidence="1">
    <location>
        <position position="104"/>
    </location>
    <ligand>
        <name>Ca(2+)</name>
        <dbReference type="ChEBI" id="CHEBI:29108"/>
        <label>3</label>
    </ligand>
</feature>
<feature type="binding site" evidence="1">
    <location>
        <position position="111"/>
    </location>
    <ligand>
        <name>Ca(2+)</name>
        <dbReference type="ChEBI" id="CHEBI:29108"/>
        <label>3</label>
    </ligand>
</feature>
<feature type="binding site" evidence="1">
    <location>
        <position position="136"/>
    </location>
    <ligand>
        <name>Ca(2+)</name>
        <dbReference type="ChEBI" id="CHEBI:29108"/>
        <label>4</label>
    </ligand>
</feature>
<feature type="binding site" evidence="1">
    <location>
        <position position="138"/>
    </location>
    <ligand>
        <name>Ca(2+)</name>
        <dbReference type="ChEBI" id="CHEBI:29108"/>
        <label>4</label>
    </ligand>
</feature>
<feature type="binding site" evidence="1">
    <location>
        <position position="140"/>
    </location>
    <ligand>
        <name>Ca(2+)</name>
        <dbReference type="ChEBI" id="CHEBI:29108"/>
        <label>4</label>
    </ligand>
</feature>
<feature type="binding site" evidence="1">
    <location>
        <position position="142"/>
    </location>
    <ligand>
        <name>Ca(2+)</name>
        <dbReference type="ChEBI" id="CHEBI:29108"/>
        <label>4</label>
    </ligand>
</feature>
<feature type="binding site" evidence="1">
    <location>
        <position position="147"/>
    </location>
    <ligand>
        <name>Ca(2+)</name>
        <dbReference type="ChEBI" id="CHEBI:29108"/>
        <label>4</label>
    </ligand>
</feature>
<name>CALMF_NAEGR</name>
<keyword id="KW-0106">Calcium</keyword>
<keyword id="KW-0966">Cell projection</keyword>
<keyword id="KW-0969">Cilium</keyword>
<keyword id="KW-0282">Flagellum</keyword>
<keyword id="KW-0479">Metal-binding</keyword>
<keyword id="KW-0677">Repeat</keyword>
<comment type="function">
    <text>Calmodulin mediates the control of a large number of enzymes, ion channels and other proteins by Ca(2+). Among the enzymes to be stimulated by the calmodulin-Ca(2+) complex are a number of protein kinases and phosphatases.</text>
</comment>
<comment type="subcellular location">
    <subcellularLocation>
        <location>Cell projection</location>
        <location>Cilium</location>
        <location>Flagellum</location>
    </subcellularLocation>
</comment>
<comment type="developmental stage">
    <text>Two calmodulins are synthesized during differentiation of Naegleria gruberi from amoebae to flagellates; one remains in the cell body and the other becomes localized in the flagella. Flagellar calmodulin first appears during early stages of differentiation, is maximally expressed at the time that flagella first appear and then levels rapidly decline.</text>
</comment>
<comment type="miscellaneous">
    <text>This protein has four functional calcium-binding sites.</text>
</comment>
<comment type="similarity">
    <text evidence="2">Belongs to the calmodulin family.</text>
</comment>
<reference key="1">
    <citation type="journal article" date="1995" name="J. Biol. Chem.">
        <title>A flagellar calmodulin gene of Naegleria, coexpressed during differentiation with flagellar tubulin genes, shares DNA, RNA, and encoded protein sequence elements.</title>
        <authorList>
            <person name="Fulton C."/>
            <person name="Lai E.Y."/>
            <person name="Remillard S.P."/>
        </authorList>
    </citation>
    <scope>NUCLEOTIDE SEQUENCE [GENOMIC DNA]</scope>
    <source>
        <strain>ATCC 30223 / NEG</strain>
    </source>
</reference>
<organism>
    <name type="scientific">Naegleria gruberi</name>
    <name type="common">Amoeba</name>
    <dbReference type="NCBI Taxonomy" id="5762"/>
    <lineage>
        <taxon>Eukaryota</taxon>
        <taxon>Discoba</taxon>
        <taxon>Heterolobosea</taxon>
        <taxon>Tetramitia</taxon>
        <taxon>Eutetramitia</taxon>
        <taxon>Vahlkampfiidae</taxon>
        <taxon>Naegleria</taxon>
    </lineage>
</organism>
<sequence length="155" mass="17613">MSREAISNNELTEEQIAEFKEAFSLFDKDGDGTITTSELGTVMRSLGQNPTEAELHDMINEVDADGNGTIDFTEFLTMMAKKMKDTDNEEEIKEAFKVFDKDGNGFISAQELRHVMCNLGEKLTDEEVDEMIREADIDGDNQINYTEFVKMMMQK</sequence>
<accession>P53440</accession>